<evidence type="ECO:0000255" key="1">
    <source>
        <dbReference type="HAMAP-Rule" id="MF_01333"/>
    </source>
</evidence>
<evidence type="ECO:0000305" key="2"/>
<reference key="1">
    <citation type="submission" date="2006-10" db="EMBL/GenBank/DDBJ databases">
        <title>Complete sequence of chromosome of Pelobacter propionicus DSM 2379.</title>
        <authorList>
            <consortium name="US DOE Joint Genome Institute"/>
            <person name="Copeland A."/>
            <person name="Lucas S."/>
            <person name="Lapidus A."/>
            <person name="Barry K."/>
            <person name="Detter J.C."/>
            <person name="Glavina del Rio T."/>
            <person name="Hammon N."/>
            <person name="Israni S."/>
            <person name="Dalin E."/>
            <person name="Tice H."/>
            <person name="Pitluck S."/>
            <person name="Saunders E."/>
            <person name="Brettin T."/>
            <person name="Bruce D."/>
            <person name="Han C."/>
            <person name="Tapia R."/>
            <person name="Schmutz J."/>
            <person name="Larimer F."/>
            <person name="Land M."/>
            <person name="Hauser L."/>
            <person name="Kyrpides N."/>
            <person name="Kim E."/>
            <person name="Lovley D."/>
            <person name="Richardson P."/>
        </authorList>
    </citation>
    <scope>NUCLEOTIDE SEQUENCE [LARGE SCALE GENOMIC DNA]</scope>
    <source>
        <strain>DSM 2379 / NBRC 103807 / OttBd1</strain>
    </source>
</reference>
<comment type="function">
    <text evidence="1">This is one of the proteins that bind and probably mediate the attachment of the 5S RNA into the large ribosomal subunit, where it forms part of the central protuberance. In the 70S ribosome it contacts protein S13 of the 30S subunit (bridge B1b), connecting the 2 subunits; this bridge is implicated in subunit movement. Contacts the P site tRNA; the 5S rRNA and some of its associated proteins might help stabilize positioning of ribosome-bound tRNAs.</text>
</comment>
<comment type="subunit">
    <text evidence="1">Part of the 50S ribosomal subunit; part of the 5S rRNA/L5/L18/L25 subcomplex. Contacts the 5S rRNA and the P site tRNA. Forms a bridge to the 30S subunit in the 70S ribosome.</text>
</comment>
<comment type="similarity">
    <text evidence="1">Belongs to the universal ribosomal protein uL5 family.</text>
</comment>
<dbReference type="EMBL" id="CP000482">
    <property type="protein sequence ID" value="ABK98323.1"/>
    <property type="molecule type" value="Genomic_DNA"/>
</dbReference>
<dbReference type="RefSeq" id="WP_011734635.1">
    <property type="nucleotide sequence ID" value="NC_008609.1"/>
</dbReference>
<dbReference type="SMR" id="A1ALV3"/>
<dbReference type="STRING" id="338966.Ppro_0692"/>
<dbReference type="KEGG" id="ppd:Ppro_0692"/>
<dbReference type="eggNOG" id="COG0094">
    <property type="taxonomic scope" value="Bacteria"/>
</dbReference>
<dbReference type="HOGENOM" id="CLU_061015_2_1_7"/>
<dbReference type="OrthoDB" id="9806626at2"/>
<dbReference type="Proteomes" id="UP000006732">
    <property type="component" value="Chromosome"/>
</dbReference>
<dbReference type="GO" id="GO:1990904">
    <property type="term" value="C:ribonucleoprotein complex"/>
    <property type="evidence" value="ECO:0007669"/>
    <property type="project" value="UniProtKB-KW"/>
</dbReference>
<dbReference type="GO" id="GO:0005840">
    <property type="term" value="C:ribosome"/>
    <property type="evidence" value="ECO:0007669"/>
    <property type="project" value="UniProtKB-KW"/>
</dbReference>
<dbReference type="GO" id="GO:0019843">
    <property type="term" value="F:rRNA binding"/>
    <property type="evidence" value="ECO:0007669"/>
    <property type="project" value="UniProtKB-UniRule"/>
</dbReference>
<dbReference type="GO" id="GO:0003735">
    <property type="term" value="F:structural constituent of ribosome"/>
    <property type="evidence" value="ECO:0007669"/>
    <property type="project" value="InterPro"/>
</dbReference>
<dbReference type="GO" id="GO:0000049">
    <property type="term" value="F:tRNA binding"/>
    <property type="evidence" value="ECO:0007669"/>
    <property type="project" value="UniProtKB-UniRule"/>
</dbReference>
<dbReference type="GO" id="GO:0006412">
    <property type="term" value="P:translation"/>
    <property type="evidence" value="ECO:0007669"/>
    <property type="project" value="UniProtKB-UniRule"/>
</dbReference>
<dbReference type="FunFam" id="3.30.1440.10:FF:000001">
    <property type="entry name" value="50S ribosomal protein L5"/>
    <property type="match status" value="1"/>
</dbReference>
<dbReference type="Gene3D" id="3.30.1440.10">
    <property type="match status" value="1"/>
</dbReference>
<dbReference type="HAMAP" id="MF_01333_B">
    <property type="entry name" value="Ribosomal_uL5_B"/>
    <property type="match status" value="1"/>
</dbReference>
<dbReference type="InterPro" id="IPR002132">
    <property type="entry name" value="Ribosomal_uL5"/>
</dbReference>
<dbReference type="InterPro" id="IPR020930">
    <property type="entry name" value="Ribosomal_uL5_bac-type"/>
</dbReference>
<dbReference type="InterPro" id="IPR031309">
    <property type="entry name" value="Ribosomal_uL5_C"/>
</dbReference>
<dbReference type="InterPro" id="IPR020929">
    <property type="entry name" value="Ribosomal_uL5_CS"/>
</dbReference>
<dbReference type="InterPro" id="IPR022803">
    <property type="entry name" value="Ribosomal_uL5_dom_sf"/>
</dbReference>
<dbReference type="InterPro" id="IPR031310">
    <property type="entry name" value="Ribosomal_uL5_N"/>
</dbReference>
<dbReference type="NCBIfam" id="NF000585">
    <property type="entry name" value="PRK00010.1"/>
    <property type="match status" value="1"/>
</dbReference>
<dbReference type="PANTHER" id="PTHR11994">
    <property type="entry name" value="60S RIBOSOMAL PROTEIN L11-RELATED"/>
    <property type="match status" value="1"/>
</dbReference>
<dbReference type="Pfam" id="PF00281">
    <property type="entry name" value="Ribosomal_L5"/>
    <property type="match status" value="1"/>
</dbReference>
<dbReference type="Pfam" id="PF00673">
    <property type="entry name" value="Ribosomal_L5_C"/>
    <property type="match status" value="1"/>
</dbReference>
<dbReference type="PIRSF" id="PIRSF002161">
    <property type="entry name" value="Ribosomal_L5"/>
    <property type="match status" value="1"/>
</dbReference>
<dbReference type="SUPFAM" id="SSF55282">
    <property type="entry name" value="RL5-like"/>
    <property type="match status" value="1"/>
</dbReference>
<dbReference type="PROSITE" id="PS00358">
    <property type="entry name" value="RIBOSOMAL_L5"/>
    <property type="match status" value="1"/>
</dbReference>
<keyword id="KW-1185">Reference proteome</keyword>
<keyword id="KW-0687">Ribonucleoprotein</keyword>
<keyword id="KW-0689">Ribosomal protein</keyword>
<keyword id="KW-0694">RNA-binding</keyword>
<keyword id="KW-0699">rRNA-binding</keyword>
<keyword id="KW-0820">tRNA-binding</keyword>
<organism>
    <name type="scientific">Pelobacter propionicus (strain DSM 2379 / NBRC 103807 / OttBd1)</name>
    <dbReference type="NCBI Taxonomy" id="338966"/>
    <lineage>
        <taxon>Bacteria</taxon>
        <taxon>Pseudomonadati</taxon>
        <taxon>Thermodesulfobacteriota</taxon>
        <taxon>Desulfuromonadia</taxon>
        <taxon>Desulfuromonadales</taxon>
        <taxon>Desulfuromonadaceae</taxon>
        <taxon>Pelobacter</taxon>
    </lineage>
</organism>
<feature type="chain" id="PRO_1000052790" description="Large ribosomal subunit protein uL5">
    <location>
        <begin position="1"/>
        <end position="179"/>
    </location>
</feature>
<sequence>MARLKEIYHKDVMQKLRSDFSYANIMEVPKIVKVVVNMGLGEAIQNVKILDSAAAELAAITGQKTVITKAKKSIATFKLRQGMPIGCMVTLRRAKMYEFLDRLMNVSLPRVRDFKGVSAKAFDGKGNYTLGIKEQLIFPEINYDAVDKIKGMNITIVTSAKTDEEGRALLKYLGMPFRN</sequence>
<name>RL5_PELPD</name>
<gene>
    <name evidence="1" type="primary">rplE</name>
    <name type="ordered locus">Ppro_0692</name>
</gene>
<protein>
    <recommendedName>
        <fullName evidence="1">Large ribosomal subunit protein uL5</fullName>
    </recommendedName>
    <alternativeName>
        <fullName evidence="2">50S ribosomal protein L5</fullName>
    </alternativeName>
</protein>
<accession>A1ALV3</accession>
<proteinExistence type="inferred from homology"/>